<accession>Q8G4M3</accession>
<dbReference type="EC" id="6.3.2.-" evidence="1"/>
<dbReference type="EMBL" id="AE014295">
    <property type="protein sequence ID" value="AAN25156.1"/>
    <property type="molecule type" value="Genomic_DNA"/>
</dbReference>
<dbReference type="RefSeq" id="NP_696520.1">
    <property type="nucleotide sequence ID" value="NC_004307.2"/>
</dbReference>
<dbReference type="RefSeq" id="WP_007054433.1">
    <property type="nucleotide sequence ID" value="NC_004307.2"/>
</dbReference>
<dbReference type="SMR" id="Q8G4M3"/>
<dbReference type="STRING" id="206672.BL1356"/>
<dbReference type="EnsemblBacteria" id="AAN25156">
    <property type="protein sequence ID" value="AAN25156"/>
    <property type="gene ID" value="BL1356"/>
</dbReference>
<dbReference type="KEGG" id="blo:BL1356"/>
<dbReference type="PATRIC" id="fig|206672.9.peg.213"/>
<dbReference type="HOGENOM" id="CLU_022291_4_2_11"/>
<dbReference type="OrthoDB" id="9800958at2"/>
<dbReference type="PhylomeDB" id="Q8G4M3"/>
<dbReference type="UniPathway" id="UPA00219"/>
<dbReference type="Proteomes" id="UP000000439">
    <property type="component" value="Chromosome"/>
</dbReference>
<dbReference type="GO" id="GO:0005737">
    <property type="term" value="C:cytoplasm"/>
    <property type="evidence" value="ECO:0007669"/>
    <property type="project" value="UniProtKB-SubCell"/>
</dbReference>
<dbReference type="GO" id="GO:0016881">
    <property type="term" value="F:acid-amino acid ligase activity"/>
    <property type="evidence" value="ECO:0007669"/>
    <property type="project" value="UniProtKB-UniRule"/>
</dbReference>
<dbReference type="GO" id="GO:0005524">
    <property type="term" value="F:ATP binding"/>
    <property type="evidence" value="ECO:0007669"/>
    <property type="project" value="UniProtKB-UniRule"/>
</dbReference>
<dbReference type="GO" id="GO:0000287">
    <property type="term" value="F:magnesium ion binding"/>
    <property type="evidence" value="ECO:0007669"/>
    <property type="project" value="UniProtKB-UniRule"/>
</dbReference>
<dbReference type="GO" id="GO:0051301">
    <property type="term" value="P:cell division"/>
    <property type="evidence" value="ECO:0007669"/>
    <property type="project" value="UniProtKB-KW"/>
</dbReference>
<dbReference type="GO" id="GO:0071555">
    <property type="term" value="P:cell wall organization"/>
    <property type="evidence" value="ECO:0007669"/>
    <property type="project" value="UniProtKB-KW"/>
</dbReference>
<dbReference type="GO" id="GO:0009252">
    <property type="term" value="P:peptidoglycan biosynthetic process"/>
    <property type="evidence" value="ECO:0007669"/>
    <property type="project" value="UniProtKB-UniRule"/>
</dbReference>
<dbReference type="GO" id="GO:0008360">
    <property type="term" value="P:regulation of cell shape"/>
    <property type="evidence" value="ECO:0007669"/>
    <property type="project" value="UniProtKB-KW"/>
</dbReference>
<dbReference type="Gene3D" id="3.90.190.20">
    <property type="entry name" value="Mur ligase, C-terminal domain"/>
    <property type="match status" value="1"/>
</dbReference>
<dbReference type="Gene3D" id="3.40.1190.10">
    <property type="entry name" value="Mur-like, catalytic domain"/>
    <property type="match status" value="1"/>
</dbReference>
<dbReference type="Gene3D" id="3.40.1390.10">
    <property type="entry name" value="MurE/MurF, N-terminal domain"/>
    <property type="match status" value="1"/>
</dbReference>
<dbReference type="HAMAP" id="MF_00208">
    <property type="entry name" value="MurE"/>
    <property type="match status" value="1"/>
</dbReference>
<dbReference type="InterPro" id="IPR036565">
    <property type="entry name" value="Mur-like_cat_sf"/>
</dbReference>
<dbReference type="InterPro" id="IPR004101">
    <property type="entry name" value="Mur_ligase_C"/>
</dbReference>
<dbReference type="InterPro" id="IPR036615">
    <property type="entry name" value="Mur_ligase_C_dom_sf"/>
</dbReference>
<dbReference type="InterPro" id="IPR013221">
    <property type="entry name" value="Mur_ligase_cen"/>
</dbReference>
<dbReference type="InterPro" id="IPR035911">
    <property type="entry name" value="MurE/MurF_N"/>
</dbReference>
<dbReference type="InterPro" id="IPR005761">
    <property type="entry name" value="UDP-N-AcMur-Glu-dNH2Pim_ligase"/>
</dbReference>
<dbReference type="NCBIfam" id="TIGR01085">
    <property type="entry name" value="murE"/>
    <property type="match status" value="1"/>
</dbReference>
<dbReference type="NCBIfam" id="NF001129">
    <property type="entry name" value="PRK00139.2-3"/>
    <property type="match status" value="1"/>
</dbReference>
<dbReference type="PANTHER" id="PTHR23135">
    <property type="entry name" value="MUR LIGASE FAMILY MEMBER"/>
    <property type="match status" value="1"/>
</dbReference>
<dbReference type="PANTHER" id="PTHR23135:SF4">
    <property type="entry name" value="UDP-N-ACETYLMURAMOYL-L-ALANYL-D-GLUTAMATE--2,6-DIAMINOPIMELATE LIGASE MURE HOMOLOG, CHLOROPLASTIC"/>
    <property type="match status" value="1"/>
</dbReference>
<dbReference type="Pfam" id="PF02875">
    <property type="entry name" value="Mur_ligase_C"/>
    <property type="match status" value="1"/>
</dbReference>
<dbReference type="Pfam" id="PF08245">
    <property type="entry name" value="Mur_ligase_M"/>
    <property type="match status" value="1"/>
</dbReference>
<dbReference type="SUPFAM" id="SSF53623">
    <property type="entry name" value="MurD-like peptide ligases, catalytic domain"/>
    <property type="match status" value="1"/>
</dbReference>
<dbReference type="SUPFAM" id="SSF53244">
    <property type="entry name" value="MurD-like peptide ligases, peptide-binding domain"/>
    <property type="match status" value="1"/>
</dbReference>
<dbReference type="SUPFAM" id="SSF63418">
    <property type="entry name" value="MurE/MurF N-terminal domain"/>
    <property type="match status" value="1"/>
</dbReference>
<sequence>MALTLASAADLLKEHHLLREIIQGDVWTDDPARIASADEPFAGITYDTRKVTPGTLLCCKGQFKAEYLNGIDEAGLAAYVAETEYSAATATPGLIVNDARKAMSLLSAAFYGYPQNELTVIGVTGTKGKTTTSYFTQALINAVSGGKAALFSSVDNCLDGHTYVESDLTTPESMDAFRMMREAADNGMKYLVMEVSSQAYKVDRVYGLTFDVAAFLNISPDHISPIEHPTFEDYLYCKRQIIVNAKSLVLGADSLHADLLREDAEAAGIGVTTFALHDADNAGTSADVVAWPADPAHASFHIADGDQALGDYHLSIDGDFNYLNAAAAIAIAHAVGVSLDDADALHAIESVRIAGRMEQFRDPQSNTLAIVDYAHNYASVTALLDFVYERWGEENPRITLVTGSAGNKAYDRRKEIVEAAENRIANFIFTAEDTDTEPIIDICMEMQGYITNKDVVSTVISDRLTAITNAIYDARAHADRFNILLIIGKGNERWIKDHRKHVPFDGDDHVVERMFGL</sequence>
<evidence type="ECO:0000255" key="1">
    <source>
        <dbReference type="HAMAP-Rule" id="MF_00208"/>
    </source>
</evidence>
<proteinExistence type="inferred from homology"/>
<keyword id="KW-0067">ATP-binding</keyword>
<keyword id="KW-0131">Cell cycle</keyword>
<keyword id="KW-0132">Cell division</keyword>
<keyword id="KW-0133">Cell shape</keyword>
<keyword id="KW-0961">Cell wall biogenesis/degradation</keyword>
<keyword id="KW-0963">Cytoplasm</keyword>
<keyword id="KW-0436">Ligase</keyword>
<keyword id="KW-0547">Nucleotide-binding</keyword>
<keyword id="KW-0573">Peptidoglycan synthesis</keyword>
<keyword id="KW-1185">Reference proteome</keyword>
<reference key="1">
    <citation type="journal article" date="2002" name="Proc. Natl. Acad. Sci. U.S.A.">
        <title>The genome sequence of Bifidobacterium longum reflects its adaptation to the human gastrointestinal tract.</title>
        <authorList>
            <person name="Schell M.A."/>
            <person name="Karmirantzou M."/>
            <person name="Snel B."/>
            <person name="Vilanova D."/>
            <person name="Berger B."/>
            <person name="Pessi G."/>
            <person name="Zwahlen M.-C."/>
            <person name="Desiere F."/>
            <person name="Bork P."/>
            <person name="Delley M."/>
            <person name="Pridmore R.D."/>
            <person name="Arigoni F."/>
        </authorList>
    </citation>
    <scope>NUCLEOTIDE SEQUENCE [LARGE SCALE GENOMIC DNA]</scope>
    <source>
        <strain>NCC 2705</strain>
    </source>
</reference>
<protein>
    <recommendedName>
        <fullName evidence="1">UDP-N-acetylmuramyl-tripeptide synthetase</fullName>
        <ecNumber evidence="1">6.3.2.-</ecNumber>
    </recommendedName>
    <alternativeName>
        <fullName evidence="1">UDP-MurNAc-tripeptide synthetase</fullName>
    </alternativeName>
</protein>
<feature type="chain" id="PRO_0000101868" description="UDP-N-acetylmuramyl-tripeptide synthetase">
    <location>
        <begin position="1"/>
        <end position="517"/>
    </location>
</feature>
<feature type="binding site" evidence="1">
    <location>
        <position position="48"/>
    </location>
    <ligand>
        <name>UDP-N-acetyl-alpha-D-muramoyl-L-alanyl-D-glutamate</name>
        <dbReference type="ChEBI" id="CHEBI:83900"/>
    </ligand>
</feature>
<feature type="binding site" evidence="1">
    <location>
        <begin position="125"/>
        <end position="131"/>
    </location>
    <ligand>
        <name>ATP</name>
        <dbReference type="ChEBI" id="CHEBI:30616"/>
    </ligand>
</feature>
<feature type="binding site" evidence="1">
    <location>
        <begin position="169"/>
        <end position="170"/>
    </location>
    <ligand>
        <name>UDP-N-acetyl-alpha-D-muramoyl-L-alanyl-D-glutamate</name>
        <dbReference type="ChEBI" id="CHEBI:83900"/>
    </ligand>
</feature>
<feature type="binding site" evidence="1">
    <location>
        <position position="196"/>
    </location>
    <ligand>
        <name>UDP-N-acetyl-alpha-D-muramoyl-L-alanyl-D-glutamate</name>
        <dbReference type="ChEBI" id="CHEBI:83900"/>
    </ligand>
</feature>
<feature type="binding site" evidence="1">
    <location>
        <position position="204"/>
    </location>
    <ligand>
        <name>UDP-N-acetyl-alpha-D-muramoyl-L-alanyl-D-glutamate</name>
        <dbReference type="ChEBI" id="CHEBI:83900"/>
    </ligand>
</feature>
<feature type="modified residue" description="N6-carboxylysine" evidence="1">
    <location>
        <position position="238"/>
    </location>
</feature>
<comment type="function">
    <text evidence="1">Catalyzes the addition of an amino acid to the nucleotide precursor UDP-N-acetylmuramoyl-L-alanyl-D-glutamate (UMAG) in the biosynthesis of bacterial cell-wall peptidoglycan.</text>
</comment>
<comment type="pathway">
    <text evidence="1">Cell wall biogenesis; peptidoglycan biosynthesis.</text>
</comment>
<comment type="subcellular location">
    <subcellularLocation>
        <location evidence="1">Cytoplasm</location>
    </subcellularLocation>
</comment>
<comment type="PTM">
    <text evidence="1">Carboxylation is probably crucial for Mg(2+) binding and, consequently, for the gamma-phosphate positioning of ATP.</text>
</comment>
<comment type="similarity">
    <text evidence="1">Belongs to the MurCDEF family. MurE subfamily.</text>
</comment>
<gene>
    <name evidence="1" type="primary">murE</name>
    <name type="ordered locus">BL1356</name>
</gene>
<organism>
    <name type="scientific">Bifidobacterium longum (strain NCC 2705)</name>
    <dbReference type="NCBI Taxonomy" id="206672"/>
    <lineage>
        <taxon>Bacteria</taxon>
        <taxon>Bacillati</taxon>
        <taxon>Actinomycetota</taxon>
        <taxon>Actinomycetes</taxon>
        <taxon>Bifidobacteriales</taxon>
        <taxon>Bifidobacteriaceae</taxon>
        <taxon>Bifidobacterium</taxon>
    </lineage>
</organism>
<name>MURE_BIFLO</name>